<organism>
    <name type="scientific">Caenorhabditis elegans</name>
    <dbReference type="NCBI Taxonomy" id="6239"/>
    <lineage>
        <taxon>Eukaryota</taxon>
        <taxon>Metazoa</taxon>
        <taxon>Ecdysozoa</taxon>
        <taxon>Nematoda</taxon>
        <taxon>Chromadorea</taxon>
        <taxon>Rhabditida</taxon>
        <taxon>Rhabditina</taxon>
        <taxon>Rhabditomorpha</taxon>
        <taxon>Rhabditoidea</taxon>
        <taxon>Rhabditidae</taxon>
        <taxon>Peloderinae</taxon>
        <taxon>Caenorhabditis</taxon>
    </lineage>
</organism>
<dbReference type="EMBL" id="DQ298419">
    <property type="protein sequence ID" value="ABC33802.1"/>
    <property type="molecule type" value="mRNA"/>
</dbReference>
<dbReference type="EMBL" id="FO081833">
    <property type="protein sequence ID" value="CCD73970.1"/>
    <property type="status" value="ALT_SEQ"/>
    <property type="molecule type" value="Genomic_DNA"/>
</dbReference>
<dbReference type="EMBL" id="FO081833">
    <property type="protein sequence ID" value="CCD73971.1"/>
    <property type="molecule type" value="Genomic_DNA"/>
</dbReference>
<dbReference type="PIR" id="S44885">
    <property type="entry name" value="S44885"/>
</dbReference>
<dbReference type="RefSeq" id="NP_498689.2">
    <property type="nucleotide sequence ID" value="NM_066288.4"/>
</dbReference>
<dbReference type="RefSeq" id="NP_871672.2">
    <molecule id="P34599-2"/>
    <property type="nucleotide sequence ID" value="NM_181943.7"/>
</dbReference>
<dbReference type="SMR" id="P34599"/>
<dbReference type="BioGRID" id="41295">
    <property type="interactions" value="5"/>
</dbReference>
<dbReference type="FunCoup" id="P34599">
    <property type="interactions" value="2321"/>
</dbReference>
<dbReference type="IntAct" id="P34599">
    <property type="interactions" value="5"/>
</dbReference>
<dbReference type="STRING" id="6239.ZC97.1a.1"/>
<dbReference type="PaxDb" id="6239-ZC97.1a"/>
<dbReference type="PeptideAtlas" id="P34599"/>
<dbReference type="EnsemblMetazoa" id="ZC97.1a.1">
    <property type="protein sequence ID" value="ZC97.1a.1"/>
    <property type="gene ID" value="WBGene00022516"/>
</dbReference>
<dbReference type="EnsemblMetazoa" id="ZC97.1a.2">
    <property type="protein sequence ID" value="ZC97.1a.2"/>
    <property type="gene ID" value="WBGene00022516"/>
</dbReference>
<dbReference type="EnsemblMetazoa" id="ZC97.1b.1">
    <molecule id="P34599-2"/>
    <property type="protein sequence ID" value="ZC97.1b.1"/>
    <property type="gene ID" value="WBGene00022516"/>
</dbReference>
<dbReference type="GeneID" id="176087"/>
<dbReference type="KEGG" id="cel:CELE_ZC97.1"/>
<dbReference type="AGR" id="WB:WBGene00022516"/>
<dbReference type="CTD" id="176087"/>
<dbReference type="WormBase" id="ZC97.1a">
    <property type="protein sequence ID" value="CE00360"/>
    <property type="gene ID" value="WBGene00022516"/>
    <property type="gene designation" value="mtx-2"/>
</dbReference>
<dbReference type="WormBase" id="ZC97.1b">
    <molecule id="P34599-2"/>
    <property type="protein sequence ID" value="CE45721"/>
    <property type="gene ID" value="WBGene00022516"/>
    <property type="gene designation" value="mtx-2"/>
</dbReference>
<dbReference type="eggNOG" id="KOG3027">
    <property type="taxonomic scope" value="Eukaryota"/>
</dbReference>
<dbReference type="GeneTree" id="ENSGT00950000182919"/>
<dbReference type="HOGENOM" id="CLU_044137_6_0_1"/>
<dbReference type="InParanoid" id="P34599"/>
<dbReference type="OrthoDB" id="198787at2759"/>
<dbReference type="PhylomeDB" id="P34599"/>
<dbReference type="PRO" id="PR:P34599"/>
<dbReference type="Proteomes" id="UP000001940">
    <property type="component" value="Chromosome III"/>
</dbReference>
<dbReference type="Bgee" id="WBGene00022516">
    <property type="expression patterns" value="Expressed in embryo and 4 other cell types or tissues"/>
</dbReference>
<dbReference type="GO" id="GO:0005737">
    <property type="term" value="C:cytoplasm"/>
    <property type="evidence" value="ECO:0000318"/>
    <property type="project" value="GO_Central"/>
</dbReference>
<dbReference type="GO" id="GO:0005739">
    <property type="term" value="C:mitochondrion"/>
    <property type="evidence" value="ECO:0007005"/>
    <property type="project" value="WormBase"/>
</dbReference>
<dbReference type="GO" id="GO:0001401">
    <property type="term" value="C:SAM complex"/>
    <property type="evidence" value="ECO:0000318"/>
    <property type="project" value="GO_Central"/>
</dbReference>
<dbReference type="GO" id="GO:0007005">
    <property type="term" value="P:mitochondrion organization"/>
    <property type="evidence" value="ECO:0000318"/>
    <property type="project" value="GO_Central"/>
</dbReference>
<dbReference type="GO" id="GO:0015031">
    <property type="term" value="P:protein transport"/>
    <property type="evidence" value="ECO:0007669"/>
    <property type="project" value="UniProtKB-KW"/>
</dbReference>
<dbReference type="CDD" id="cd03079">
    <property type="entry name" value="GST_N_Metaxin2"/>
    <property type="match status" value="1"/>
</dbReference>
<dbReference type="InterPro" id="IPR036282">
    <property type="entry name" value="Glutathione-S-Trfase_C_sf"/>
</dbReference>
<dbReference type="InterPro" id="IPR033468">
    <property type="entry name" value="Metaxin_GST"/>
</dbReference>
<dbReference type="InterPro" id="IPR050931">
    <property type="entry name" value="Mito_Protein_Transport_Metaxin"/>
</dbReference>
<dbReference type="InterPro" id="IPR019564">
    <property type="entry name" value="Sam37/metaxin_N"/>
</dbReference>
<dbReference type="PANTHER" id="PTHR12289">
    <property type="entry name" value="METAXIN RELATED"/>
    <property type="match status" value="1"/>
</dbReference>
<dbReference type="PANTHER" id="PTHR12289:SF38">
    <property type="entry name" value="METAXIN-2"/>
    <property type="match status" value="1"/>
</dbReference>
<dbReference type="Pfam" id="PF17171">
    <property type="entry name" value="GST_C_6"/>
    <property type="match status" value="1"/>
</dbReference>
<dbReference type="Pfam" id="PF10568">
    <property type="entry name" value="Tom37"/>
    <property type="match status" value="1"/>
</dbReference>
<dbReference type="SUPFAM" id="SSF47616">
    <property type="entry name" value="GST C-terminal domain-like"/>
    <property type="match status" value="1"/>
</dbReference>
<name>MTX2_CAEEL</name>
<proteinExistence type="evidence at transcript level"/>
<accession>P34599</accession>
<accession>E9P839</accession>
<accession>Q2PWT9</accession>
<accession>Q8I7F3</accession>
<keyword id="KW-0025">Alternative splicing</keyword>
<keyword id="KW-0472">Membrane</keyword>
<keyword id="KW-0496">Mitochondrion</keyword>
<keyword id="KW-1000">Mitochondrion outer membrane</keyword>
<keyword id="KW-0653">Protein transport</keyword>
<keyword id="KW-1185">Reference proteome</keyword>
<keyword id="KW-0813">Transport</keyword>
<evidence type="ECO:0000250" key="1">
    <source>
        <dbReference type="UniProtKB" id="O75431"/>
    </source>
</evidence>
<evidence type="ECO:0000269" key="2">
    <source>
    </source>
</evidence>
<evidence type="ECO:0000305" key="3"/>
<protein>
    <recommendedName>
        <fullName>Metaxin-2 homolog</fullName>
    </recommendedName>
    <alternativeName>
        <fullName>Mitochondrial outer membrane import complex protein 2</fullName>
    </alternativeName>
</protein>
<comment type="function">
    <text evidence="1">Involved in transport of proteins into the mitochondrion.</text>
</comment>
<comment type="subunit">
    <text evidence="1">Associates with the mitochondrial contact site and cristae organizing system (MICOS) complex (also known as MINOS or MitOS complex).</text>
</comment>
<comment type="subcellular location">
    <subcellularLocation>
        <location evidence="3">Mitochondrion outer membrane</location>
    </subcellularLocation>
</comment>
<comment type="alternative products">
    <event type="alternative splicing"/>
    <isoform>
        <id>P34599-1</id>
        <name>a</name>
        <sequence type="displayed"/>
    </isoform>
    <isoform>
        <id>P34599-2</id>
        <name>b</name>
        <sequence type="described" ref="VSP_017570 VSP_017571"/>
    </isoform>
</comment>
<comment type="disruption phenotype">
    <text evidence="2">Knockout animals show abnormal mitochondrial morphology. Mutant worms display developmental delay, with almost none reaching the young adult state.</text>
</comment>
<comment type="similarity">
    <text evidence="3">Belongs to the metaxin family.</text>
</comment>
<comment type="sequence caution" evidence="3">
    <conflict type="erroneous gene model prediction">
        <sequence resource="EMBL-CDS" id="CCD73970"/>
    </conflict>
</comment>
<sequence length="230" mass="26085">MSSSGVITQLVTDALSMNAAQDWEDVSLFTPYLNDQALMYDFADCLAVQTFLRMTSLPFNVRQRPNVDFISPDGVVPLLKINKTLITGFNAIVDFVHKKGVTLTSHLSETQVADMRANISMIEHLLTTVEKFVLWNHDETYDKVTKLRYGSVYHWPLSSVLPFVKRRKILEELSDKDWDTKTMDEVGEQADKVFRALSAQLGSQKYLTGDLPTEADALLFGHMYTLITVR</sequence>
<reference key="1">
    <citation type="submission" date="2005-11" db="EMBL/GenBank/DDBJ databases">
        <title>A Caenorhabditis elegans metaxin 2 homolog: cDNA and protein structure.</title>
        <authorList>
            <person name="Adolph K.W."/>
        </authorList>
    </citation>
    <scope>NUCLEOTIDE SEQUENCE [MRNA] (ISOFORM A)</scope>
    <source>
        <strain>Bristol N2</strain>
        <tissue>Larva</tissue>
    </source>
</reference>
<reference key="2">
    <citation type="journal article" date="1994" name="Nature">
        <title>2.2 Mb of contiguous nucleotide sequence from chromosome III of C. elegans.</title>
        <authorList>
            <person name="Wilson R."/>
            <person name="Ainscough R."/>
            <person name="Anderson K."/>
            <person name="Baynes C."/>
            <person name="Berks M."/>
            <person name="Bonfield J."/>
            <person name="Burton J."/>
            <person name="Connell M."/>
            <person name="Copsey T."/>
            <person name="Cooper J."/>
            <person name="Coulson A."/>
            <person name="Craxton M."/>
            <person name="Dear S."/>
            <person name="Du Z."/>
            <person name="Durbin R."/>
            <person name="Favello A."/>
            <person name="Fraser A."/>
            <person name="Fulton L."/>
            <person name="Gardner A."/>
            <person name="Green P."/>
            <person name="Hawkins T."/>
            <person name="Hillier L."/>
            <person name="Jier M."/>
            <person name="Johnston L."/>
            <person name="Jones M."/>
            <person name="Kershaw J."/>
            <person name="Kirsten J."/>
            <person name="Laisster N."/>
            <person name="Latreille P."/>
            <person name="Lightning J."/>
            <person name="Lloyd C."/>
            <person name="Mortimore B."/>
            <person name="O'Callaghan M."/>
            <person name="Parsons J."/>
            <person name="Percy C."/>
            <person name="Rifken L."/>
            <person name="Roopra A."/>
            <person name="Saunders D."/>
            <person name="Shownkeen R."/>
            <person name="Sims M."/>
            <person name="Smaldon N."/>
            <person name="Smith A."/>
            <person name="Smith M."/>
            <person name="Sonnhammer E."/>
            <person name="Staden R."/>
            <person name="Sulston J."/>
            <person name="Thierry-Mieg J."/>
            <person name="Thomas K."/>
            <person name="Vaudin M."/>
            <person name="Vaughan K."/>
            <person name="Waterston R."/>
            <person name="Watson A."/>
            <person name="Weinstock L."/>
            <person name="Wilkinson-Sproat J."/>
            <person name="Wohldman P."/>
        </authorList>
    </citation>
    <scope>NUCLEOTIDE SEQUENCE [LARGE SCALE GENOMIC DNA]</scope>
    <source>
        <strain>Bristol N2</strain>
    </source>
</reference>
<reference key="3">
    <citation type="journal article" date="1998" name="Science">
        <title>Genome sequence of the nematode C. elegans: a platform for investigating biology.</title>
        <authorList>
            <consortium name="The C. elegans sequencing consortium"/>
        </authorList>
    </citation>
    <scope>NUCLEOTIDE SEQUENCE [LARGE SCALE GENOMIC DNA]</scope>
    <scope>ALTERNATIVE SPLICING</scope>
    <source>
        <strain>Bristol N2</strain>
    </source>
</reference>
<reference key="4">
    <citation type="journal article" date="2020" name="Nat. Commun.">
        <title>Loss of MTX2 causes mandibuloacral dysplasia and links mitochondrial dysfunction to altered nuclear morphology.</title>
        <authorList>
            <person name="Elouej S."/>
            <person name="Harhouri K."/>
            <person name="Le Mao M."/>
            <person name="Baujat G."/>
            <person name="Nampoothiri S."/>
            <person name="Kayserili H."/>
            <person name="Menabawy N.A."/>
            <person name="Selim L."/>
            <person name="Paneque A.L."/>
            <person name="Kubisch C."/>
            <person name="Lessel D."/>
            <person name="Rubinsztajn R."/>
            <person name="Charar C."/>
            <person name="Bartoli C."/>
            <person name="Airault C."/>
            <person name="Deleuze J.F."/>
            <person name="Roetig A."/>
            <person name="Bauer P."/>
            <person name="Pereira C."/>
            <person name="Loh A."/>
            <person name="Escande-Beillard N."/>
            <person name="Muchir A."/>
            <person name="Martino L."/>
            <person name="Gruenbaum Y."/>
            <person name="Lee S.H."/>
            <person name="Manivet P."/>
            <person name="Lenaers G."/>
            <person name="Reversade B."/>
            <person name="Levy N."/>
            <person name="De Sandre-Giovannoli A."/>
        </authorList>
    </citation>
    <scope>DISRUPTION PHENOTYPE</scope>
</reference>
<feature type="chain" id="PRO_0000220997" description="Metaxin-2 homolog">
    <location>
        <begin position="1"/>
        <end position="230"/>
    </location>
</feature>
<feature type="splice variant" id="VSP_017570" description="In isoform b." evidence="3">
    <original>VDFIS</original>
    <variation>ESSHF</variation>
    <location>
        <begin position="67"/>
        <end position="71"/>
    </location>
</feature>
<feature type="splice variant" id="VSP_017571" description="In isoform b." evidence="3">
    <location>
        <begin position="72"/>
        <end position="230"/>
    </location>
</feature>
<gene>
    <name type="primary">mtx-2</name>
    <name type="ORF">ZC97.1</name>
</gene>